<name>SYP_STAAM</name>
<accession>Q99UK9</accession>
<proteinExistence type="inferred from homology"/>
<protein>
    <recommendedName>
        <fullName evidence="1">Proline--tRNA ligase</fullName>
        <ecNumber evidence="1">6.1.1.15</ecNumber>
    </recommendedName>
    <alternativeName>
        <fullName evidence="1">Prolyl-tRNA synthetase</fullName>
        <shortName evidence="1">ProRS</shortName>
    </alternativeName>
</protein>
<gene>
    <name evidence="1" type="primary">proS</name>
    <name type="ordered locus">SAV1263</name>
</gene>
<reference key="1">
    <citation type="journal article" date="2001" name="Lancet">
        <title>Whole genome sequencing of meticillin-resistant Staphylococcus aureus.</title>
        <authorList>
            <person name="Kuroda M."/>
            <person name="Ohta T."/>
            <person name="Uchiyama I."/>
            <person name="Baba T."/>
            <person name="Yuzawa H."/>
            <person name="Kobayashi I."/>
            <person name="Cui L."/>
            <person name="Oguchi A."/>
            <person name="Aoki K."/>
            <person name="Nagai Y."/>
            <person name="Lian J.-Q."/>
            <person name="Ito T."/>
            <person name="Kanamori M."/>
            <person name="Matsumaru H."/>
            <person name="Maruyama A."/>
            <person name="Murakami H."/>
            <person name="Hosoyama A."/>
            <person name="Mizutani-Ui Y."/>
            <person name="Takahashi N.K."/>
            <person name="Sawano T."/>
            <person name="Inoue R."/>
            <person name="Kaito C."/>
            <person name="Sekimizu K."/>
            <person name="Hirakawa H."/>
            <person name="Kuhara S."/>
            <person name="Goto S."/>
            <person name="Yabuzaki J."/>
            <person name="Kanehisa M."/>
            <person name="Yamashita A."/>
            <person name="Oshima K."/>
            <person name="Furuya K."/>
            <person name="Yoshino C."/>
            <person name="Shiba T."/>
            <person name="Hattori M."/>
            <person name="Ogasawara N."/>
            <person name="Hayashi H."/>
            <person name="Hiramatsu K."/>
        </authorList>
    </citation>
    <scope>NUCLEOTIDE SEQUENCE [LARGE SCALE GENOMIC DNA]</scope>
    <source>
        <strain>Mu50 / ATCC 700699</strain>
    </source>
</reference>
<organism>
    <name type="scientific">Staphylococcus aureus (strain Mu50 / ATCC 700699)</name>
    <dbReference type="NCBI Taxonomy" id="158878"/>
    <lineage>
        <taxon>Bacteria</taxon>
        <taxon>Bacillati</taxon>
        <taxon>Bacillota</taxon>
        <taxon>Bacilli</taxon>
        <taxon>Bacillales</taxon>
        <taxon>Staphylococcaceae</taxon>
        <taxon>Staphylococcus</taxon>
    </lineage>
</organism>
<comment type="function">
    <text evidence="1">Catalyzes the attachment of proline to tRNA(Pro) in a two-step reaction: proline is first activated by ATP to form Pro-AMP and then transferred to the acceptor end of tRNA(Pro). As ProRS can inadvertently accommodate and process non-cognate amino acids such as alanine and cysteine, to avoid such errors it has two additional distinct editing activities against alanine. One activity is designated as 'pretransfer' editing and involves the tRNA(Pro)-independent hydrolysis of activated Ala-AMP. The other activity is designated 'posttransfer' editing and involves deacylation of mischarged Ala-tRNA(Pro). The misacylated Cys-tRNA(Pro) is not edited by ProRS.</text>
</comment>
<comment type="catalytic activity">
    <reaction evidence="1">
        <text>tRNA(Pro) + L-proline + ATP = L-prolyl-tRNA(Pro) + AMP + diphosphate</text>
        <dbReference type="Rhea" id="RHEA:14305"/>
        <dbReference type="Rhea" id="RHEA-COMP:9700"/>
        <dbReference type="Rhea" id="RHEA-COMP:9702"/>
        <dbReference type="ChEBI" id="CHEBI:30616"/>
        <dbReference type="ChEBI" id="CHEBI:33019"/>
        <dbReference type="ChEBI" id="CHEBI:60039"/>
        <dbReference type="ChEBI" id="CHEBI:78442"/>
        <dbReference type="ChEBI" id="CHEBI:78532"/>
        <dbReference type="ChEBI" id="CHEBI:456215"/>
        <dbReference type="EC" id="6.1.1.15"/>
    </reaction>
</comment>
<comment type="subunit">
    <text evidence="1">Homodimer.</text>
</comment>
<comment type="subcellular location">
    <subcellularLocation>
        <location evidence="1">Cytoplasm</location>
    </subcellularLocation>
</comment>
<comment type="domain">
    <text evidence="1">Consists of three domains: the N-terminal catalytic domain, the editing domain and the C-terminal anticodon-binding domain.</text>
</comment>
<comment type="similarity">
    <text evidence="1">Belongs to the class-II aminoacyl-tRNA synthetase family. ProS type 1 subfamily.</text>
</comment>
<sequence length="567" mass="63859">MKQSKVFIPTMRDVPSEAEAQSHRLLLKSGLIKQSTSGIYSYLPLATRVLNNITAIVRQEMERIDSVEILMPALQQAELWEESGRWGAYGPELMRLQDRHGRQFALGPTHEELVTSIVRNELKSYKQLPMTLFQIQSKFRDEKRPRFGLLRGREFIMKDAYSFHADEASLDQTYQDMYQAYSRIFERVGINARPVVADSGAIGGSHTHEFMALSAIGEDTIVYSKESDYAANIEKAEVVYEPNHKHSTVQPLEKIETPNVKTAQELADFLGRPVDEIVKTMIFKVDGEYIMVLVRGHHEINDIKLKSYFGTDNIELATQDEIVNLVGANPGSLGPVIDKEIKIYADNFVQDLNNLVVGANEDGYHLINVNVGRDFNVDEYGDFRFILEGEKLSDGSGVAHFAEGIEVGQVFKLGTKYSESMNATFLDNQGKAQPLIMGCYGIGISRTLSAIVEQNHDDNGIVWPKSVTPFDLHLISINPKKDDQRELADALYAEFNTKFDVLYDDRQERAGVKFNDADLIGLPLRIVVGKRASEGIVEVKERLTGDSEEVHIDDLMTVITNKYDNLK</sequence>
<keyword id="KW-0030">Aminoacyl-tRNA synthetase</keyword>
<keyword id="KW-0067">ATP-binding</keyword>
<keyword id="KW-0963">Cytoplasm</keyword>
<keyword id="KW-0436">Ligase</keyword>
<keyword id="KW-0547">Nucleotide-binding</keyword>
<keyword id="KW-0648">Protein biosynthesis</keyword>
<feature type="chain" id="PRO_0000139339" description="Proline--tRNA ligase">
    <location>
        <begin position="1"/>
        <end position="567"/>
    </location>
</feature>
<dbReference type="EC" id="6.1.1.15" evidence="1"/>
<dbReference type="EMBL" id="BA000017">
    <property type="protein sequence ID" value="BAB57425.1"/>
    <property type="molecule type" value="Genomic_DNA"/>
</dbReference>
<dbReference type="RefSeq" id="WP_000814094.1">
    <property type="nucleotide sequence ID" value="NC_002758.2"/>
</dbReference>
<dbReference type="SMR" id="Q99UK9"/>
<dbReference type="KEGG" id="sav:SAV1263"/>
<dbReference type="HOGENOM" id="CLU_016739_0_0_9"/>
<dbReference type="PhylomeDB" id="Q99UK9"/>
<dbReference type="Proteomes" id="UP000002481">
    <property type="component" value="Chromosome"/>
</dbReference>
<dbReference type="GO" id="GO:0005829">
    <property type="term" value="C:cytosol"/>
    <property type="evidence" value="ECO:0007669"/>
    <property type="project" value="TreeGrafter"/>
</dbReference>
<dbReference type="GO" id="GO:0002161">
    <property type="term" value="F:aminoacyl-tRNA deacylase activity"/>
    <property type="evidence" value="ECO:0007669"/>
    <property type="project" value="InterPro"/>
</dbReference>
<dbReference type="GO" id="GO:0005524">
    <property type="term" value="F:ATP binding"/>
    <property type="evidence" value="ECO:0007669"/>
    <property type="project" value="UniProtKB-UniRule"/>
</dbReference>
<dbReference type="GO" id="GO:0140096">
    <property type="term" value="F:catalytic activity, acting on a protein"/>
    <property type="evidence" value="ECO:0007669"/>
    <property type="project" value="UniProtKB-ARBA"/>
</dbReference>
<dbReference type="GO" id="GO:0004827">
    <property type="term" value="F:proline-tRNA ligase activity"/>
    <property type="evidence" value="ECO:0007669"/>
    <property type="project" value="UniProtKB-UniRule"/>
</dbReference>
<dbReference type="GO" id="GO:0016740">
    <property type="term" value="F:transferase activity"/>
    <property type="evidence" value="ECO:0007669"/>
    <property type="project" value="UniProtKB-ARBA"/>
</dbReference>
<dbReference type="GO" id="GO:0006433">
    <property type="term" value="P:prolyl-tRNA aminoacylation"/>
    <property type="evidence" value="ECO:0007669"/>
    <property type="project" value="UniProtKB-UniRule"/>
</dbReference>
<dbReference type="CDD" id="cd04334">
    <property type="entry name" value="ProRS-INS"/>
    <property type="match status" value="1"/>
</dbReference>
<dbReference type="CDD" id="cd00861">
    <property type="entry name" value="ProRS_anticodon_short"/>
    <property type="match status" value="1"/>
</dbReference>
<dbReference type="CDD" id="cd00779">
    <property type="entry name" value="ProRS_core_prok"/>
    <property type="match status" value="1"/>
</dbReference>
<dbReference type="FunFam" id="3.30.930.10:FF:000043">
    <property type="entry name" value="Proline--tRNA ligase"/>
    <property type="match status" value="1"/>
</dbReference>
<dbReference type="FunFam" id="3.40.50.800:FF:000011">
    <property type="entry name" value="Proline--tRNA ligase"/>
    <property type="match status" value="1"/>
</dbReference>
<dbReference type="Gene3D" id="3.40.50.800">
    <property type="entry name" value="Anticodon-binding domain"/>
    <property type="match status" value="1"/>
</dbReference>
<dbReference type="Gene3D" id="3.30.930.10">
    <property type="entry name" value="Bira Bifunctional Protein, Domain 2"/>
    <property type="match status" value="2"/>
</dbReference>
<dbReference type="Gene3D" id="3.90.960.10">
    <property type="entry name" value="YbaK/aminoacyl-tRNA synthetase-associated domain"/>
    <property type="match status" value="1"/>
</dbReference>
<dbReference type="HAMAP" id="MF_01569">
    <property type="entry name" value="Pro_tRNA_synth_type1"/>
    <property type="match status" value="1"/>
</dbReference>
<dbReference type="InterPro" id="IPR002314">
    <property type="entry name" value="aa-tRNA-synt_IIb"/>
</dbReference>
<dbReference type="InterPro" id="IPR006195">
    <property type="entry name" value="aa-tRNA-synth_II"/>
</dbReference>
<dbReference type="InterPro" id="IPR045864">
    <property type="entry name" value="aa-tRNA-synth_II/BPL/LPL"/>
</dbReference>
<dbReference type="InterPro" id="IPR004154">
    <property type="entry name" value="Anticodon-bd"/>
</dbReference>
<dbReference type="InterPro" id="IPR036621">
    <property type="entry name" value="Anticodon-bd_dom_sf"/>
</dbReference>
<dbReference type="InterPro" id="IPR002316">
    <property type="entry name" value="Pro-tRNA-ligase_IIa"/>
</dbReference>
<dbReference type="InterPro" id="IPR004500">
    <property type="entry name" value="Pro-tRNA-synth_IIa_bac-type"/>
</dbReference>
<dbReference type="InterPro" id="IPR023717">
    <property type="entry name" value="Pro-tRNA-Synthase_IIa_type1"/>
</dbReference>
<dbReference type="InterPro" id="IPR050062">
    <property type="entry name" value="Pro-tRNA_synthetase"/>
</dbReference>
<dbReference type="InterPro" id="IPR044140">
    <property type="entry name" value="ProRS_anticodon_short"/>
</dbReference>
<dbReference type="InterPro" id="IPR033730">
    <property type="entry name" value="ProRS_core_prok"/>
</dbReference>
<dbReference type="InterPro" id="IPR036754">
    <property type="entry name" value="YbaK/aa-tRNA-synt-asso_dom_sf"/>
</dbReference>
<dbReference type="InterPro" id="IPR007214">
    <property type="entry name" value="YbaK/aa-tRNA-synth-assoc-dom"/>
</dbReference>
<dbReference type="NCBIfam" id="NF006625">
    <property type="entry name" value="PRK09194.1"/>
    <property type="match status" value="1"/>
</dbReference>
<dbReference type="NCBIfam" id="TIGR00409">
    <property type="entry name" value="proS_fam_II"/>
    <property type="match status" value="1"/>
</dbReference>
<dbReference type="PANTHER" id="PTHR42753">
    <property type="entry name" value="MITOCHONDRIAL RIBOSOME PROTEIN L39/PROLYL-TRNA LIGASE FAMILY MEMBER"/>
    <property type="match status" value="1"/>
</dbReference>
<dbReference type="PANTHER" id="PTHR42753:SF2">
    <property type="entry name" value="PROLINE--TRNA LIGASE"/>
    <property type="match status" value="1"/>
</dbReference>
<dbReference type="Pfam" id="PF03129">
    <property type="entry name" value="HGTP_anticodon"/>
    <property type="match status" value="1"/>
</dbReference>
<dbReference type="Pfam" id="PF00587">
    <property type="entry name" value="tRNA-synt_2b"/>
    <property type="match status" value="1"/>
</dbReference>
<dbReference type="Pfam" id="PF04073">
    <property type="entry name" value="tRNA_edit"/>
    <property type="match status" value="1"/>
</dbReference>
<dbReference type="PRINTS" id="PR01046">
    <property type="entry name" value="TRNASYNTHPRO"/>
</dbReference>
<dbReference type="SUPFAM" id="SSF52954">
    <property type="entry name" value="Class II aaRS ABD-related"/>
    <property type="match status" value="1"/>
</dbReference>
<dbReference type="SUPFAM" id="SSF55681">
    <property type="entry name" value="Class II aaRS and biotin synthetases"/>
    <property type="match status" value="1"/>
</dbReference>
<dbReference type="SUPFAM" id="SSF55826">
    <property type="entry name" value="YbaK/ProRS associated domain"/>
    <property type="match status" value="1"/>
</dbReference>
<dbReference type="PROSITE" id="PS50862">
    <property type="entry name" value="AA_TRNA_LIGASE_II"/>
    <property type="match status" value="1"/>
</dbReference>
<evidence type="ECO:0000255" key="1">
    <source>
        <dbReference type="HAMAP-Rule" id="MF_01569"/>
    </source>
</evidence>